<accession>P85247</accession>
<accession>B3W6I6</accession>
<proteinExistence type="evidence at protein level"/>
<feature type="signal peptide" evidence="1">
    <location>
        <begin position="1"/>
        <end position="20"/>
    </location>
</feature>
<feature type="propeptide" id="PRO_0000366081" evidence="2">
    <location>
        <begin position="21"/>
        <end position="60"/>
    </location>
</feature>
<feature type="chain" id="PRO_0000337165" description="M-zodatoxin-Lt8h">
    <location>
        <begin position="61"/>
        <end position="129"/>
    </location>
</feature>
<evidence type="ECO:0000255" key="1"/>
<evidence type="ECO:0000269" key="2">
    <source>
    </source>
</evidence>
<evidence type="ECO:0000305" key="3"/>
<organism>
    <name type="scientific">Lachesana tarabaevi</name>
    <name type="common">Spider</name>
    <dbReference type="NCBI Taxonomy" id="379576"/>
    <lineage>
        <taxon>Eukaryota</taxon>
        <taxon>Metazoa</taxon>
        <taxon>Ecdysozoa</taxon>
        <taxon>Arthropoda</taxon>
        <taxon>Chelicerata</taxon>
        <taxon>Arachnida</taxon>
        <taxon>Araneae</taxon>
        <taxon>Araneomorphae</taxon>
        <taxon>Entelegynae</taxon>
        <taxon>Entelegynae incertae sedis</taxon>
        <taxon>Zodariidae</taxon>
        <taxon>Lachesana</taxon>
    </lineage>
</organism>
<comment type="function">
    <text evidence="2">Insecticidal, cytolytic and antimicrobial peptide. Has insecticidal activity against the flesh fly S.carnaria. Has antibacterial activity against the Gram-negative bacteria E.coli. Forms voltage-dependent, ion-permeable channels in membranes. At high concentration causes cell membrane lysis.</text>
</comment>
<comment type="subcellular location">
    <subcellularLocation>
        <location evidence="2">Secreted</location>
    </subcellularLocation>
</comment>
<comment type="tissue specificity">
    <text evidence="2">Expressed by the venom gland.</text>
</comment>
<comment type="similarity">
    <text evidence="3">Belongs to the cationic peptide 06 (cytoinsectotoxin) family.</text>
</comment>
<dbReference type="EMBL" id="FM165481">
    <property type="protein sequence ID" value="CAQ63557.1"/>
    <property type="molecule type" value="mRNA"/>
</dbReference>
<dbReference type="ArachnoServer" id="AS000565">
    <property type="toxin name" value="M-zodatoxin-Lt8h"/>
</dbReference>
<dbReference type="GO" id="GO:0005576">
    <property type="term" value="C:extracellular region"/>
    <property type="evidence" value="ECO:0000314"/>
    <property type="project" value="UniProtKB"/>
</dbReference>
<dbReference type="GO" id="GO:0090729">
    <property type="term" value="F:toxin activity"/>
    <property type="evidence" value="ECO:0007669"/>
    <property type="project" value="UniProtKB-KW"/>
</dbReference>
<dbReference type="GO" id="GO:0051838">
    <property type="term" value="P:cytolysis by host of symbiont cells"/>
    <property type="evidence" value="ECO:0000314"/>
    <property type="project" value="UniProtKB"/>
</dbReference>
<dbReference type="GO" id="GO:0050829">
    <property type="term" value="P:defense response to Gram-negative bacterium"/>
    <property type="evidence" value="ECO:0000314"/>
    <property type="project" value="UniProtKB"/>
</dbReference>
<dbReference type="GO" id="GO:0050830">
    <property type="term" value="P:defense response to Gram-positive bacterium"/>
    <property type="evidence" value="ECO:0000250"/>
    <property type="project" value="UniProtKB"/>
</dbReference>
<reference evidence="3" key="1">
    <citation type="journal article" date="2008" name="Biochem. J.">
        <title>Cyto-insectotoxins, a novel class of cytolytic and insecticidal peptides from spider venom.</title>
        <authorList>
            <person name="Vassilevski A.A."/>
            <person name="Kozlov S.A."/>
            <person name="Samsonova O.V."/>
            <person name="Egorova N.S."/>
            <person name="Karpunin D.V."/>
            <person name="Pluzhnikov K.A."/>
            <person name="Feofanov A.V."/>
            <person name="Grishin E.V."/>
        </authorList>
    </citation>
    <scope>NUCLEOTIDE SEQUENCE [MRNA]</scope>
    <scope>PROTEIN SEQUENCE OF 61-129</scope>
    <scope>FUNCTION</scope>
    <scope>SUBCELLULAR LOCATION</scope>
    <scope>TISSUE SPECIFICITY</scope>
    <source>
        <tissue evidence="2">Venom</tissue>
        <tissue>Venom gland</tissue>
    </source>
</reference>
<keyword id="KW-0044">Antibiotic</keyword>
<keyword id="KW-0929">Antimicrobial</keyword>
<keyword id="KW-0204">Cytolysis</keyword>
<keyword id="KW-0903">Direct protein sequencing</keyword>
<keyword id="KW-0354">Hemolysis</keyword>
<keyword id="KW-0964">Secreted</keyword>
<keyword id="KW-0732">Signal</keyword>
<keyword id="KW-0800">Toxin</keyword>
<name>CT111_LACTA</name>
<protein>
    <recommendedName>
        <fullName>M-zodatoxin-Lt8h</fullName>
        <shortName>M-ZDTX-Lt8h</shortName>
    </recommendedName>
    <alternativeName>
        <fullName>Cytoinsectotoxin-1h</fullName>
        <shortName>CIT-1h</shortName>
    </alternativeName>
</protein>
<gene>
    <name type="primary">cit 1-11</name>
</gene>
<sequence>MKYFVVALALVAAFACIAESKPAESEHELAEVEEENELADLEDAVWLEDLADLSDLEETRGFFGNAWKKIKGKAEKFFRKKAAKIIAKKEGITKEEAEAKVDTMSKKQIKVYLLKHYGKKALQKASEKL</sequence>